<comment type="function">
    <text evidence="1">Part of the ABC transporter complex MalEFGK involved in maltose/maltodextrin import. Probably responsible for the translocation of the substrate across the membrane.</text>
</comment>
<comment type="subunit">
    <text evidence="1">The complex is composed of two ATP-binding proteins (MalK), two transmembrane proteins (MalG and MalF) and a solute-binding protein (MalE).</text>
</comment>
<comment type="subcellular location">
    <subcellularLocation>
        <location evidence="1">Cell inner membrane</location>
        <topology evidence="1">Multi-pass membrane protein</topology>
    </subcellularLocation>
</comment>
<comment type="similarity">
    <text evidence="4">Belongs to the binding-protein-dependent transport system permease family. MalFG subfamily.</text>
</comment>
<protein>
    <recommendedName>
        <fullName evidence="1">Maltose/maltodextrin transport system permease protein MalF</fullName>
    </recommendedName>
</protein>
<reference key="1">
    <citation type="journal article" date="2001" name="Nature">
        <title>Genome sequence of enterohaemorrhagic Escherichia coli O157:H7.</title>
        <authorList>
            <person name="Perna N.T."/>
            <person name="Plunkett G. III"/>
            <person name="Burland V."/>
            <person name="Mau B."/>
            <person name="Glasner J.D."/>
            <person name="Rose D.J."/>
            <person name="Mayhew G.F."/>
            <person name="Evans P.S."/>
            <person name="Gregor J."/>
            <person name="Kirkpatrick H.A."/>
            <person name="Posfai G."/>
            <person name="Hackett J."/>
            <person name="Klink S."/>
            <person name="Boutin A."/>
            <person name="Shao Y."/>
            <person name="Miller L."/>
            <person name="Grotbeck E.J."/>
            <person name="Davis N.W."/>
            <person name="Lim A."/>
            <person name="Dimalanta E.T."/>
            <person name="Potamousis K."/>
            <person name="Apodaca J."/>
            <person name="Anantharaman T.S."/>
            <person name="Lin J."/>
            <person name="Yen G."/>
            <person name="Schwartz D.C."/>
            <person name="Welch R.A."/>
            <person name="Blattner F.R."/>
        </authorList>
    </citation>
    <scope>NUCLEOTIDE SEQUENCE [LARGE SCALE GENOMIC DNA]</scope>
    <source>
        <strain>O157:H7 / EDL933 / ATCC 700927 / EHEC</strain>
    </source>
</reference>
<reference key="2">
    <citation type="journal article" date="2001" name="DNA Res.">
        <title>Complete genome sequence of enterohemorrhagic Escherichia coli O157:H7 and genomic comparison with a laboratory strain K-12.</title>
        <authorList>
            <person name="Hayashi T."/>
            <person name="Makino K."/>
            <person name="Ohnishi M."/>
            <person name="Kurokawa K."/>
            <person name="Ishii K."/>
            <person name="Yokoyama K."/>
            <person name="Han C.-G."/>
            <person name="Ohtsubo E."/>
            <person name="Nakayama K."/>
            <person name="Murata T."/>
            <person name="Tanaka M."/>
            <person name="Tobe T."/>
            <person name="Iida T."/>
            <person name="Takami H."/>
            <person name="Honda T."/>
            <person name="Sasakawa C."/>
            <person name="Ogasawara N."/>
            <person name="Yasunaga T."/>
            <person name="Kuhara S."/>
            <person name="Shiba T."/>
            <person name="Hattori M."/>
            <person name="Shinagawa H."/>
        </authorList>
    </citation>
    <scope>NUCLEOTIDE SEQUENCE [LARGE SCALE GENOMIC DNA]</scope>
    <source>
        <strain>O157:H7 / Sakai / RIMD 0509952 / EHEC</strain>
    </source>
</reference>
<accession>Q7A937</accession>
<accession>Q8X5W8</accession>
<evidence type="ECO:0000250" key="1">
    <source>
        <dbReference type="UniProtKB" id="P02916"/>
    </source>
</evidence>
<evidence type="ECO:0000255" key="2"/>
<evidence type="ECO:0000255" key="3">
    <source>
        <dbReference type="PROSITE-ProRule" id="PRU00441"/>
    </source>
</evidence>
<evidence type="ECO:0000305" key="4"/>
<gene>
    <name type="primary">malF</name>
    <name type="ordered locus">Z5631</name>
    <name type="ordered locus">ECs5016</name>
</gene>
<proteinExistence type="inferred from homology"/>
<dbReference type="EMBL" id="AE005174">
    <property type="protein sequence ID" value="AAG59232.1"/>
    <property type="molecule type" value="Genomic_DNA"/>
</dbReference>
<dbReference type="EMBL" id="BA000007">
    <property type="protein sequence ID" value="BAB38439.1"/>
    <property type="molecule type" value="Genomic_DNA"/>
</dbReference>
<dbReference type="PIR" id="D86096">
    <property type="entry name" value="D86096"/>
</dbReference>
<dbReference type="PIR" id="H91255">
    <property type="entry name" value="H91255"/>
</dbReference>
<dbReference type="RefSeq" id="NP_313043.1">
    <property type="nucleotide sequence ID" value="NC_002695.1"/>
</dbReference>
<dbReference type="RefSeq" id="WP_001301434.1">
    <property type="nucleotide sequence ID" value="NZ_VOAI01000027.1"/>
</dbReference>
<dbReference type="BMRB" id="Q7A937"/>
<dbReference type="SMR" id="Q7A937"/>
<dbReference type="STRING" id="155864.Z5631"/>
<dbReference type="KEGG" id="ece:Z5631"/>
<dbReference type="PATRIC" id="fig|386585.9.peg.5239"/>
<dbReference type="eggNOG" id="COG1175">
    <property type="taxonomic scope" value="Bacteria"/>
</dbReference>
<dbReference type="HOGENOM" id="CLU_016047_20_0_6"/>
<dbReference type="OMA" id="IITQNRQ"/>
<dbReference type="Proteomes" id="UP000000558">
    <property type="component" value="Chromosome"/>
</dbReference>
<dbReference type="Proteomes" id="UP000002519">
    <property type="component" value="Chromosome"/>
</dbReference>
<dbReference type="GO" id="GO:1990060">
    <property type="term" value="C:maltose transport complex"/>
    <property type="evidence" value="ECO:0007669"/>
    <property type="project" value="TreeGrafter"/>
</dbReference>
<dbReference type="GO" id="GO:0015423">
    <property type="term" value="F:ABC-type maltose transporter activity"/>
    <property type="evidence" value="ECO:0007669"/>
    <property type="project" value="TreeGrafter"/>
</dbReference>
<dbReference type="GO" id="GO:0042956">
    <property type="term" value="P:maltodextrin transmembrane transport"/>
    <property type="evidence" value="ECO:0007669"/>
    <property type="project" value="TreeGrafter"/>
</dbReference>
<dbReference type="CDD" id="cd06261">
    <property type="entry name" value="TM_PBP2"/>
    <property type="match status" value="1"/>
</dbReference>
<dbReference type="FunFam" id="1.10.3720.10:FF:000030">
    <property type="entry name" value="Maltose ABC transporter permease MalF"/>
    <property type="match status" value="1"/>
</dbReference>
<dbReference type="FunFam" id="1.20.58.370:FF:000001">
    <property type="entry name" value="Maltose ABC transporter permease MalF"/>
    <property type="match status" value="1"/>
</dbReference>
<dbReference type="FunFam" id="2.40.430.10:FF:000001">
    <property type="entry name" value="Maltose ABC transporter permease MalF"/>
    <property type="match status" value="1"/>
</dbReference>
<dbReference type="Gene3D" id="2.40.430.10">
    <property type="entry name" value="D-maltodextrin-binding protein, MBP"/>
    <property type="match status" value="1"/>
</dbReference>
<dbReference type="Gene3D" id="1.20.58.370">
    <property type="entry name" value="MalF N-terminal region-like"/>
    <property type="match status" value="1"/>
</dbReference>
<dbReference type="Gene3D" id="3.10.650.10">
    <property type="entry name" value="MalF N-terminal region-like"/>
    <property type="match status" value="1"/>
</dbReference>
<dbReference type="Gene3D" id="1.10.3720.10">
    <property type="entry name" value="MetI-like"/>
    <property type="match status" value="1"/>
</dbReference>
<dbReference type="InterPro" id="IPR035277">
    <property type="entry name" value="MalF_N"/>
</dbReference>
<dbReference type="InterPro" id="IPR048464">
    <property type="entry name" value="MalF_N_TM"/>
</dbReference>
<dbReference type="InterPro" id="IPR029345">
    <property type="entry name" value="MalF_P2"/>
</dbReference>
<dbReference type="InterPro" id="IPR047103">
    <property type="entry name" value="MalF_P2_sf"/>
</dbReference>
<dbReference type="InterPro" id="IPR000515">
    <property type="entry name" value="MetI-like"/>
</dbReference>
<dbReference type="InterPro" id="IPR035906">
    <property type="entry name" value="MetI-like_sf"/>
</dbReference>
<dbReference type="NCBIfam" id="NF008232">
    <property type="entry name" value="PRK10999.1"/>
    <property type="match status" value="1"/>
</dbReference>
<dbReference type="PANTHER" id="PTHR47314">
    <property type="entry name" value="MALTOSE/MALTODEXTRIN TRANSPORT SYSTEM PERMEASE PROTEIN MALF"/>
    <property type="match status" value="1"/>
</dbReference>
<dbReference type="PANTHER" id="PTHR47314:SF1">
    <property type="entry name" value="MALTOSE_MALTODEXTRIN TRANSPORT SYSTEM PERMEASE PROTEIN MALF"/>
    <property type="match status" value="1"/>
</dbReference>
<dbReference type="Pfam" id="PF00528">
    <property type="entry name" value="BPD_transp_1"/>
    <property type="match status" value="1"/>
</dbReference>
<dbReference type="Pfam" id="PF20872">
    <property type="entry name" value="MalF_N_TM"/>
    <property type="match status" value="1"/>
</dbReference>
<dbReference type="Pfam" id="PF14785">
    <property type="entry name" value="MalF_P2"/>
    <property type="match status" value="1"/>
</dbReference>
<dbReference type="SUPFAM" id="SSF160964">
    <property type="entry name" value="MalF N-terminal region-like"/>
    <property type="match status" value="1"/>
</dbReference>
<dbReference type="SUPFAM" id="SSF161098">
    <property type="entry name" value="MetI-like"/>
    <property type="match status" value="1"/>
</dbReference>
<dbReference type="PROSITE" id="PS50928">
    <property type="entry name" value="ABC_TM1"/>
    <property type="match status" value="1"/>
</dbReference>
<name>MALF_ECO57</name>
<feature type="chain" id="PRO_0000060069" description="Maltose/maltodextrin transport system permease protein MalF">
    <location>
        <begin position="1"/>
        <end position="514"/>
    </location>
</feature>
<feature type="topological domain" description="Cytoplasmic" evidence="2">
    <location>
        <begin position="1"/>
        <end position="16"/>
    </location>
</feature>
<feature type="transmembrane region" description="Helical" evidence="3">
    <location>
        <begin position="17"/>
        <end position="36"/>
    </location>
</feature>
<feature type="topological domain" description="Periplasmic" evidence="2">
    <location>
        <begin position="37"/>
        <end position="39"/>
    </location>
</feature>
<feature type="transmembrane region" description="Helical" evidence="3">
    <location>
        <begin position="40"/>
        <end position="57"/>
    </location>
</feature>
<feature type="topological domain" description="Cytoplasmic" evidence="2">
    <location>
        <begin position="58"/>
        <end position="69"/>
    </location>
</feature>
<feature type="transmembrane region" description="Helical" evidence="3">
    <location>
        <begin position="70"/>
        <end position="92"/>
    </location>
</feature>
<feature type="topological domain" description="Periplasmic" evidence="2">
    <location>
        <begin position="93"/>
        <end position="283"/>
    </location>
</feature>
<feature type="transmembrane region" description="Helical" evidence="3">
    <location>
        <begin position="284"/>
        <end position="306"/>
    </location>
</feature>
<feature type="topological domain" description="Cytoplasmic" evidence="2">
    <location>
        <begin position="307"/>
        <end position="318"/>
    </location>
</feature>
<feature type="transmembrane region" description="Helical" evidence="3">
    <location>
        <begin position="319"/>
        <end position="341"/>
    </location>
</feature>
<feature type="topological domain" description="Periplasmic" evidence="2">
    <location>
        <begin position="342"/>
        <end position="369"/>
    </location>
</feature>
<feature type="transmembrane region" description="Helical" evidence="3">
    <location>
        <begin position="370"/>
        <end position="392"/>
    </location>
</feature>
<feature type="topological domain" description="Cytoplasmic" evidence="2">
    <location>
        <begin position="393"/>
        <end position="412"/>
    </location>
</feature>
<feature type="transmembrane region" description="Helical" evidence="3">
    <location>
        <begin position="413"/>
        <end position="435"/>
    </location>
</feature>
<feature type="topological domain" description="Periplasmic" evidence="2">
    <location>
        <begin position="436"/>
        <end position="483"/>
    </location>
</feature>
<feature type="transmembrane region" description="Helical" evidence="3">
    <location>
        <begin position="484"/>
        <end position="506"/>
    </location>
</feature>
<feature type="topological domain" description="Cytoplasmic" evidence="2">
    <location>
        <begin position="507"/>
        <end position="514"/>
    </location>
</feature>
<feature type="domain" description="ABC transmembrane type-1" evidence="3">
    <location>
        <begin position="281"/>
        <end position="505"/>
    </location>
</feature>
<organism>
    <name type="scientific">Escherichia coli O157:H7</name>
    <dbReference type="NCBI Taxonomy" id="83334"/>
    <lineage>
        <taxon>Bacteria</taxon>
        <taxon>Pseudomonadati</taxon>
        <taxon>Pseudomonadota</taxon>
        <taxon>Gammaproteobacteria</taxon>
        <taxon>Enterobacterales</taxon>
        <taxon>Enterobacteriaceae</taxon>
        <taxon>Escherichia</taxon>
    </lineage>
</organism>
<sequence>MDVIKKKHWWQSDALKWSVLGLLGLLVGYLVVLMYAQGEYLFAITTLILSSAGLYIFANRKAYAWRYVYPGMAGMGLFVLFPLVCTIAIAFTNYSSTNQLTFERAQEVLLDRSWQAGKTYNFGLYPAGDEWQLALSDGETGKNYLSDAFKFGREQKLQLKETTAQPEGERANLRVITQNRQALSDITAILPDGNKVMMSSLRQFSGTQPLYTLDGDGTLTNNQSGVKYRPNNQIGFYQSITADGNWGDEKLSPGYTVTTGWKNFTRVFTDEGIQKPFLAIFVWTVVFSLITVFLTVAVGMVLACLVQWEALRGKAVYRVLLILPYAVPSFISILIFKGLFNQSFGEINMMLSALFGVKPAWFSDPTTARTMLIIVNTWLGYPYMMILCMGLLKAIPDDLYEASAMDGAGPFQNFFKITLPLLIKPLTPLMIASFAFNFNNFVLIQLLTNGGPDRLGTTTPAGYTDLLVNYTYRIAFEGGGGQDFGLAAAIATLIFLLVGALAIVNLKATRMKFD</sequence>
<keyword id="KW-0997">Cell inner membrane</keyword>
<keyword id="KW-1003">Cell membrane</keyword>
<keyword id="KW-0472">Membrane</keyword>
<keyword id="KW-1185">Reference proteome</keyword>
<keyword id="KW-0762">Sugar transport</keyword>
<keyword id="KW-0812">Transmembrane</keyword>
<keyword id="KW-1133">Transmembrane helix</keyword>
<keyword id="KW-0813">Transport</keyword>